<evidence type="ECO:0000255" key="1">
    <source>
        <dbReference type="HAMAP-Rule" id="MF_01699"/>
    </source>
</evidence>
<name>RUTA_CROS8</name>
<accession>A7ME52</accession>
<comment type="function">
    <text evidence="1">Catalyzes the pyrimidine ring opening between N-3 and C-4 by an unusual flavin hydroperoxide-catalyzed mechanism, adding oxygen atoms in the process to yield ureidoacrylate peracid, that immediately reacts with FMN forming ureidoacrylate and FMN-N(5)-oxide. The FMN-N(5)-oxide reacts spontaneously with NADH to produce FMN. Requires the flavin reductase RutF to regenerate FMN in vivo.</text>
</comment>
<comment type="catalytic activity">
    <reaction evidence="1">
        <text>uracil + FMNH2 + NADH + O2 = (Z)-3-ureidoacrylate + FMN + NAD(+) + H2O + H(+)</text>
        <dbReference type="Rhea" id="RHEA:31587"/>
        <dbReference type="ChEBI" id="CHEBI:15377"/>
        <dbReference type="ChEBI" id="CHEBI:15378"/>
        <dbReference type="ChEBI" id="CHEBI:15379"/>
        <dbReference type="ChEBI" id="CHEBI:17568"/>
        <dbReference type="ChEBI" id="CHEBI:57540"/>
        <dbReference type="ChEBI" id="CHEBI:57618"/>
        <dbReference type="ChEBI" id="CHEBI:57945"/>
        <dbReference type="ChEBI" id="CHEBI:58210"/>
        <dbReference type="ChEBI" id="CHEBI:59891"/>
        <dbReference type="EC" id="1.14.99.46"/>
    </reaction>
</comment>
<comment type="catalytic activity">
    <reaction evidence="1">
        <text>thymine + FMNH2 + NADH + O2 = (Z)-2-methylureidoacrylate + FMN + NAD(+) + H2O + H(+)</text>
        <dbReference type="Rhea" id="RHEA:31599"/>
        <dbReference type="ChEBI" id="CHEBI:15377"/>
        <dbReference type="ChEBI" id="CHEBI:15378"/>
        <dbReference type="ChEBI" id="CHEBI:15379"/>
        <dbReference type="ChEBI" id="CHEBI:17821"/>
        <dbReference type="ChEBI" id="CHEBI:57540"/>
        <dbReference type="ChEBI" id="CHEBI:57618"/>
        <dbReference type="ChEBI" id="CHEBI:57945"/>
        <dbReference type="ChEBI" id="CHEBI:58210"/>
        <dbReference type="ChEBI" id="CHEBI:143783"/>
        <dbReference type="EC" id="1.14.99.46"/>
    </reaction>
</comment>
<comment type="similarity">
    <text evidence="1">Belongs to the NtaA/SnaA/DszA monooxygenase family. RutA subfamily.</text>
</comment>
<keyword id="KW-0285">Flavoprotein</keyword>
<keyword id="KW-0288">FMN</keyword>
<keyword id="KW-0503">Monooxygenase</keyword>
<keyword id="KW-0521">NADP</keyword>
<keyword id="KW-0560">Oxidoreductase</keyword>
<keyword id="KW-1185">Reference proteome</keyword>
<protein>
    <recommendedName>
        <fullName evidence="1">Pyrimidine monooxygenase RutA</fullName>
        <ecNumber evidence="1">1.14.99.46</ecNumber>
    </recommendedName>
</protein>
<feature type="chain" id="PRO_0000402591" description="Pyrimidine monooxygenase RutA">
    <location>
        <begin position="1"/>
        <end position="339"/>
    </location>
</feature>
<feature type="binding site" evidence="1">
    <location>
        <begin position="26"/>
        <end position="27"/>
    </location>
    <ligand>
        <name>FMN</name>
        <dbReference type="ChEBI" id="CHEBI:58210"/>
    </ligand>
</feature>
<feature type="binding site" evidence="1">
    <location>
        <position position="92"/>
    </location>
    <ligand>
        <name>FMN</name>
        <dbReference type="ChEBI" id="CHEBI:58210"/>
    </ligand>
</feature>
<feature type="binding site" evidence="1">
    <location>
        <position position="101"/>
    </location>
    <ligand>
        <name>FMN</name>
        <dbReference type="ChEBI" id="CHEBI:58210"/>
    </ligand>
</feature>
<feature type="binding site" evidence="1">
    <location>
        <begin position="117"/>
        <end position="118"/>
    </location>
    <ligand>
        <name>FMN</name>
        <dbReference type="ChEBI" id="CHEBI:58210"/>
    </ligand>
</feature>
<feature type="binding site" evidence="1">
    <location>
        <position position="167"/>
    </location>
    <ligand>
        <name>FMN</name>
        <dbReference type="ChEBI" id="CHEBI:58210"/>
    </ligand>
</feature>
<reference key="1">
    <citation type="journal article" date="2010" name="PLoS ONE">
        <title>Genome sequence of Cronobacter sakazakii BAA-894 and comparative genomic hybridization analysis with other Cronobacter species.</title>
        <authorList>
            <person name="Kucerova E."/>
            <person name="Clifton S.W."/>
            <person name="Xia X.Q."/>
            <person name="Long F."/>
            <person name="Porwollik S."/>
            <person name="Fulton L."/>
            <person name="Fronick C."/>
            <person name="Minx P."/>
            <person name="Kyung K."/>
            <person name="Warren W."/>
            <person name="Fulton R."/>
            <person name="Feng D."/>
            <person name="Wollam A."/>
            <person name="Shah N."/>
            <person name="Bhonagiri V."/>
            <person name="Nash W.E."/>
            <person name="Hallsworth-Pepin K."/>
            <person name="Wilson R.K."/>
            <person name="McClelland M."/>
            <person name="Forsythe S.J."/>
        </authorList>
    </citation>
    <scope>NUCLEOTIDE SEQUENCE [LARGE SCALE GENOMIC DNA]</scope>
    <source>
        <strain>ATCC BAA-894</strain>
    </source>
</reference>
<proteinExistence type="inferred from homology"/>
<organism>
    <name type="scientific">Cronobacter sakazakii (strain ATCC BAA-894)</name>
    <name type="common">Enterobacter sakazakii</name>
    <dbReference type="NCBI Taxonomy" id="290339"/>
    <lineage>
        <taxon>Bacteria</taxon>
        <taxon>Pseudomonadati</taxon>
        <taxon>Pseudomonadota</taxon>
        <taxon>Gammaproteobacteria</taxon>
        <taxon>Enterobacterales</taxon>
        <taxon>Enterobacteriaceae</taxon>
        <taxon>Cronobacter</taxon>
    </lineage>
</organism>
<sequence>MPTFELNKAIVQKAEQQQFDFALSMIKLRGFGGKTEFWDHNLESFTLMAGLAAVTSRIQIYATAATLTLPPAIVARMASTIDSISGGRFGVNLVTGWQKPEYEQMGLWPGDDYFSRRYDYLTEYVHVLRDLWDTGRSDFKGDYFTMNDCRVSPRPQQPMKVICAGQSDAGMAFSAQHADYNFCFGKGVNTPAAFAPTAARMKAAAEKAGRDVGSYVLFMVIADETDEAARAKWEHYKAGADEEALSWLTEQSQKDTRSGADTNVRQMADPTSAVNINMGTLVGSYASVARMLDEVAAVPGTEGVLLTFDDFLTGIDAFGEHIQPLMRCRDHLRVTQEVA</sequence>
<gene>
    <name evidence="1" type="primary">rutA</name>
    <name type="ordered locus">ESA_02361</name>
</gene>
<dbReference type="EC" id="1.14.99.46" evidence="1"/>
<dbReference type="EMBL" id="CP000783">
    <property type="protein sequence ID" value="ABU77608.1"/>
    <property type="molecule type" value="Genomic_DNA"/>
</dbReference>
<dbReference type="SMR" id="A7ME52"/>
<dbReference type="KEGG" id="esa:ESA_02361"/>
<dbReference type="HOGENOM" id="CLU_027853_1_1_6"/>
<dbReference type="Proteomes" id="UP000000260">
    <property type="component" value="Chromosome"/>
</dbReference>
<dbReference type="GO" id="GO:0008726">
    <property type="term" value="F:alkanesulfonate monooxygenase activity"/>
    <property type="evidence" value="ECO:0007669"/>
    <property type="project" value="TreeGrafter"/>
</dbReference>
<dbReference type="GO" id="GO:0052614">
    <property type="term" value="F:uracil oxygenase activity"/>
    <property type="evidence" value="ECO:0007669"/>
    <property type="project" value="UniProtKB-EC"/>
</dbReference>
<dbReference type="GO" id="GO:0046306">
    <property type="term" value="P:alkanesulfonate catabolic process"/>
    <property type="evidence" value="ECO:0007669"/>
    <property type="project" value="TreeGrafter"/>
</dbReference>
<dbReference type="GO" id="GO:0019740">
    <property type="term" value="P:nitrogen utilization"/>
    <property type="evidence" value="ECO:0007669"/>
    <property type="project" value="UniProtKB-UniRule"/>
</dbReference>
<dbReference type="GO" id="GO:0006212">
    <property type="term" value="P:uracil catabolic process"/>
    <property type="evidence" value="ECO:0007669"/>
    <property type="project" value="UniProtKB-UniRule"/>
</dbReference>
<dbReference type="CDD" id="cd01094">
    <property type="entry name" value="Alkanesulfonate_monoxygenase"/>
    <property type="match status" value="1"/>
</dbReference>
<dbReference type="FunFam" id="3.20.20.30:FF:000003">
    <property type="entry name" value="Pyrimidine monooxygenase RutA"/>
    <property type="match status" value="1"/>
</dbReference>
<dbReference type="Gene3D" id="3.20.20.30">
    <property type="entry name" value="Luciferase-like domain"/>
    <property type="match status" value="1"/>
</dbReference>
<dbReference type="HAMAP" id="MF_01699">
    <property type="entry name" value="RutA"/>
    <property type="match status" value="1"/>
</dbReference>
<dbReference type="InterPro" id="IPR011251">
    <property type="entry name" value="Luciferase-like_dom"/>
</dbReference>
<dbReference type="InterPro" id="IPR036661">
    <property type="entry name" value="Luciferase-like_sf"/>
</dbReference>
<dbReference type="InterPro" id="IPR019914">
    <property type="entry name" value="Pyrimidine_monooxygenase_RutA"/>
</dbReference>
<dbReference type="InterPro" id="IPR050172">
    <property type="entry name" value="SsuD_RutA_monooxygenase"/>
</dbReference>
<dbReference type="NCBIfam" id="TIGR03612">
    <property type="entry name" value="RutA"/>
    <property type="match status" value="1"/>
</dbReference>
<dbReference type="PANTHER" id="PTHR42847">
    <property type="entry name" value="ALKANESULFONATE MONOOXYGENASE"/>
    <property type="match status" value="1"/>
</dbReference>
<dbReference type="PANTHER" id="PTHR42847:SF4">
    <property type="entry name" value="ALKANESULFONATE MONOOXYGENASE-RELATED"/>
    <property type="match status" value="1"/>
</dbReference>
<dbReference type="Pfam" id="PF00296">
    <property type="entry name" value="Bac_luciferase"/>
    <property type="match status" value="1"/>
</dbReference>
<dbReference type="SUPFAM" id="SSF51679">
    <property type="entry name" value="Bacterial luciferase-like"/>
    <property type="match status" value="1"/>
</dbReference>